<feature type="chain" id="PRO_0000294420" description="Large structural protein">
    <location>
        <begin position="1"/>
        <end position="2127"/>
    </location>
</feature>
<feature type="domain" description="RdRp catalytic" evidence="4">
    <location>
        <begin position="611"/>
        <end position="799"/>
    </location>
</feature>
<feature type="domain" description="Mononegavirus-type SAM-dependent 2'-O-MTase" evidence="5">
    <location>
        <begin position="1674"/>
        <end position="1871"/>
    </location>
</feature>
<feature type="region of interest" description="Disordered" evidence="6">
    <location>
        <begin position="1"/>
        <end position="25"/>
    </location>
</feature>
<feature type="region of interest" description="Interaction with P protein" evidence="1">
    <location>
        <begin position="1562"/>
        <end position="2127"/>
    </location>
</feature>
<feature type="compositionally biased region" description="Acidic residues" evidence="6">
    <location>
        <begin position="1"/>
        <end position="19"/>
    </location>
</feature>
<organismHost>
    <name type="scientific">Homo sapiens</name>
    <name type="common">Human</name>
    <dbReference type="NCBI Taxonomy" id="9606"/>
</organismHost>
<organismHost>
    <name type="scientific">Mammalia</name>
    <dbReference type="NCBI Taxonomy" id="40674"/>
</organismHost>
<gene>
    <name type="primary">L</name>
</gene>
<evidence type="ECO:0000250" key="1"/>
<evidence type="ECO:0000250" key="2">
    <source>
        <dbReference type="UniProtKB" id="P03523"/>
    </source>
</evidence>
<evidence type="ECO:0000250" key="3">
    <source>
        <dbReference type="UniProtKB" id="P28887"/>
    </source>
</evidence>
<evidence type="ECO:0000255" key="4">
    <source>
        <dbReference type="PROSITE-ProRule" id="PRU00539"/>
    </source>
</evidence>
<evidence type="ECO:0000255" key="5">
    <source>
        <dbReference type="PROSITE-ProRule" id="PRU00923"/>
    </source>
</evidence>
<evidence type="ECO:0000256" key="6">
    <source>
        <dbReference type="SAM" id="MobiDB-lite"/>
    </source>
</evidence>
<evidence type="ECO:0000305" key="7"/>
<protein>
    <recommendedName>
        <fullName>Large structural protein</fullName>
        <shortName>Protein L</shortName>
    </recommendedName>
    <alternativeName>
        <fullName>Replicase</fullName>
    </alternativeName>
    <alternativeName>
        <fullName>Transcriptase</fullName>
    </alternativeName>
    <domain>
        <recommendedName>
            <fullName>RNA-directed RNA polymerase</fullName>
            <ecNumber evidence="3">2.7.7.48</ecNumber>
        </recommendedName>
    </domain>
    <domain>
        <recommendedName>
            <fullName evidence="2">GTP phosphohydrolase</fullName>
            <ecNumber evidence="2">3.6.1.-</ecNumber>
        </recommendedName>
    </domain>
    <domain>
        <recommendedName>
            <fullName evidence="7">GDP polyribonucleotidyltransferase</fullName>
            <ecNumber evidence="2">2.7.7.88</ecNumber>
        </recommendedName>
        <alternativeName>
            <fullName evidence="7">PRNTase</fullName>
        </alternativeName>
    </domain>
    <domain>
        <recommendedName>
            <fullName evidence="7">mRNA cap methyltransferase</fullName>
            <ecNumber evidence="2">2.1.1.375</ecNumber>
        </recommendedName>
        <alternativeName>
            <fullName evidence="2">mRNA (guanine-N(7)-)-methyltransferase</fullName>
            <shortName evidence="2">G-N7-MTase</shortName>
        </alternativeName>
        <alternativeName>
            <fullName evidence="2">mRNA (nucleoside-2'-O-)-methyltransferase</fullName>
            <shortName evidence="2">N1-2'-O-MTase</shortName>
        </alternativeName>
    </domain>
</protein>
<reference key="1">
    <citation type="submission" date="2007-01" db="EMBL/GenBank/DDBJ databases">
        <title>Complete nucleotide sequencing of SAD derivatives of attenuated rabies virus vaccine strains.</title>
        <authorList>
            <person name="Geue L."/>
            <person name="Schares S."/>
            <person name="Schnick C."/>
            <person name="Kliemt J."/>
            <person name="Beckert A."/>
            <person name="Hoffmann B."/>
            <person name="Freuling C."/>
            <person name="Marston D."/>
            <person name="McElhinney L."/>
            <person name="Fooks A."/>
            <person name="Zanoni R."/>
            <person name="Peterhans E."/>
            <person name="Cox J."/>
            <person name="Mueller T."/>
        </authorList>
    </citation>
    <scope>NUCLEOTIDE SEQUENCE [GENOMIC RNA]</scope>
</reference>
<dbReference type="EC" id="2.7.7.48" evidence="3"/>
<dbReference type="EC" id="3.6.1.-" evidence="2"/>
<dbReference type="EC" id="2.7.7.88" evidence="2"/>
<dbReference type="EC" id="2.1.1.375" evidence="2"/>
<dbReference type="EMBL" id="EF206707">
    <property type="protein sequence ID" value="ABN11295.1"/>
    <property type="molecule type" value="Viral_cRNA"/>
</dbReference>
<dbReference type="SMR" id="A3F5L9"/>
<dbReference type="Proteomes" id="UP000008619">
    <property type="component" value="Genome"/>
</dbReference>
<dbReference type="GO" id="GO:0030430">
    <property type="term" value="C:host cell cytoplasm"/>
    <property type="evidence" value="ECO:0007669"/>
    <property type="project" value="UniProtKB-SubCell"/>
</dbReference>
<dbReference type="GO" id="GO:0044423">
    <property type="term" value="C:virion component"/>
    <property type="evidence" value="ECO:0007669"/>
    <property type="project" value="UniProtKB-KW"/>
</dbReference>
<dbReference type="GO" id="GO:0005524">
    <property type="term" value="F:ATP binding"/>
    <property type="evidence" value="ECO:0007669"/>
    <property type="project" value="UniProtKB-KW"/>
</dbReference>
<dbReference type="GO" id="GO:0003924">
    <property type="term" value="F:GTPase activity"/>
    <property type="evidence" value="ECO:0007669"/>
    <property type="project" value="RHEA"/>
</dbReference>
<dbReference type="GO" id="GO:0004482">
    <property type="term" value="F:mRNA 5'-cap (guanine-N7-)-methyltransferase activity"/>
    <property type="evidence" value="ECO:0007669"/>
    <property type="project" value="InterPro"/>
</dbReference>
<dbReference type="GO" id="GO:0003968">
    <property type="term" value="F:RNA-directed RNA polymerase activity"/>
    <property type="evidence" value="ECO:0007669"/>
    <property type="project" value="UniProtKB-KW"/>
</dbReference>
<dbReference type="GO" id="GO:0039689">
    <property type="term" value="P:negative stranded viral RNA replication"/>
    <property type="evidence" value="ECO:0000250"/>
    <property type="project" value="UniProtKB"/>
</dbReference>
<dbReference type="InterPro" id="IPR039530">
    <property type="entry name" value="L_methyltransferase_rhabdo"/>
</dbReference>
<dbReference type="InterPro" id="IPR039736">
    <property type="entry name" value="L_poly_C"/>
</dbReference>
<dbReference type="InterPro" id="IPR048398">
    <property type="entry name" value="Methyltrans_Mon_C"/>
</dbReference>
<dbReference type="InterPro" id="IPR048397">
    <property type="entry name" value="Methyltrans_Mon_CD"/>
</dbReference>
<dbReference type="InterPro" id="IPR026890">
    <property type="entry name" value="Mononeg_mRNAcap"/>
</dbReference>
<dbReference type="InterPro" id="IPR014023">
    <property type="entry name" value="Mononeg_RNA_pol_cat"/>
</dbReference>
<dbReference type="InterPro" id="IPR025786">
    <property type="entry name" value="Mononega_L_MeTrfase"/>
</dbReference>
<dbReference type="InterPro" id="IPR017234">
    <property type="entry name" value="RNA-dir_pol_rhabdovirus"/>
</dbReference>
<dbReference type="NCBIfam" id="TIGR04198">
    <property type="entry name" value="paramyx_RNAcap"/>
    <property type="match status" value="1"/>
</dbReference>
<dbReference type="Pfam" id="PF21080">
    <property type="entry name" value="Methyltrans_Mon_1st"/>
    <property type="match status" value="1"/>
</dbReference>
<dbReference type="Pfam" id="PF14314">
    <property type="entry name" value="Methyltrans_Mon_2nd"/>
    <property type="match status" value="1"/>
</dbReference>
<dbReference type="Pfam" id="PF21081">
    <property type="entry name" value="Methyltrans_Mon_3rd"/>
    <property type="match status" value="1"/>
</dbReference>
<dbReference type="Pfam" id="PF14318">
    <property type="entry name" value="Mononeg_mRNAcap"/>
    <property type="match status" value="1"/>
</dbReference>
<dbReference type="Pfam" id="PF00946">
    <property type="entry name" value="Mononeg_RNA_pol"/>
    <property type="match status" value="1"/>
</dbReference>
<dbReference type="PIRSF" id="PIRSF037546">
    <property type="entry name" value="RNA_pol_RhabdoV_sub"/>
    <property type="match status" value="1"/>
</dbReference>
<dbReference type="PROSITE" id="PS50526">
    <property type="entry name" value="RDRP_SSRNA_NEG_NONSEG"/>
    <property type="match status" value="1"/>
</dbReference>
<dbReference type="PROSITE" id="PS51590">
    <property type="entry name" value="SAM_MT_MNV_L"/>
    <property type="match status" value="1"/>
</dbReference>
<proteinExistence type="inferred from homology"/>
<keyword id="KW-0067">ATP-binding</keyword>
<keyword id="KW-1035">Host cytoplasm</keyword>
<keyword id="KW-0378">Hydrolase</keyword>
<keyword id="KW-0489">Methyltransferase</keyword>
<keyword id="KW-0506">mRNA capping</keyword>
<keyword id="KW-0507">mRNA processing</keyword>
<keyword id="KW-0511">Multifunctional enzyme</keyword>
<keyword id="KW-0547">Nucleotide-binding</keyword>
<keyword id="KW-0548">Nucleotidyltransferase</keyword>
<keyword id="KW-0696">RNA-directed RNA polymerase</keyword>
<keyword id="KW-0949">S-adenosyl-L-methionine</keyword>
<keyword id="KW-0808">Transferase</keyword>
<keyword id="KW-0693">Viral RNA replication</keyword>
<keyword id="KW-0946">Virion</keyword>
<accession>A3F5L9</accession>
<sequence length="2127" mass="243070">MLDPGEVYDDPIDPIELEDEPRGTPTVPNILRNSDYNLNSPLIEDPARLMLEWLKTGNRPYRMTLTDNCSRSFRVLKDYFKKVDLGSLKVGGMAAQSMISLWLYGAHSESNRSRRCITDLAHFYSKSSPIEKLLNLTLGNRGLRIPPEGVLSCLERVDYDNAFGRYLANTYSSYLFFHVITLYMNALDWDEEKTILALWKDLTSVDIGKDLVKFKDQIWGLLIVTKDFVYSQSSNCLFDRNYTLMLKDLFLSRFNSLMVLLSPPEPRYSDDLISQLCQLYIAGDQVLSMCGNSGYEVIKILEPYVVNSLVQRAEKFRPLIHSLGDFPVFIKDKVSQLEETFGPCARRFFRALDQFDNIHDLVFVYGCYRHWGHPYIDYRKGLSKLYDQVHIKKVIDKSYQECLASDLARRILRWGFDKYSKWYLDSRFLARDHPLTPYIKTQTWPPKHIVDLVGDTWHKLPITQIFEIPESMDPSEILDDKSHSFTRTRLASWLSENRGGPVPSEKVIITALSKPPVNPREFLRSIDLGGLPDEDLIIGLKPKERELKIEGRFFALMSWNLRLYFVITEKLLANYILPLFDALTMTDNLNKVFKKLIDRVTGQGLLDYSRVTYAFHLDYEKWNNHQRLESTEDVFSVLDQVFGLKRVFSRTHEFFQKAWIYYSDRSDLIGLREDQIYCLDASNGPTCWNGQDGGLEGLRQKGWSLVSLLMIDRESQIRNTRTKILAQGDNQVLCPTYMLSPGLSQEGLLYELERISRNALSIYRAVEEGASKLGLIIKKEETMCSYDFLIYGKTPLFRGNILVPESKRWARVSCVSNDQIVNLANIMSTVSTNALTVAQHSQSLIKPMRDFLLMSVQAVFHYLLFSPILKGRVYKILSAEGDSFLLAMSRIIYLDPSLGGVSGMSLGRFHIRQFSDPVSEGLSFWREIWLSSHESWIHALCQEAGNPDLGERTLESFTRLLEDPTTLNIRGGASPTILLKDAIRKALYDEVDKVENSEFREAILLSKTHRDNFILFLTSVEPLFPRFLSELFSSSFLGIPESIIGLIQNSRTIRRQFRKSLSKTLEESFYNSEIHGISRMTQTPQRVGGVWPCSSERADLLREISWGRKVVGTTVPHPSEMLGLLPKSSISCTCGATGGGNPRVSVSVLPSFDQSFFSRGPLKGYLGSSTSMSTQLFHAWEKVTNVHVVKRALSLKESINWFITRDSNLAQALIRNIMSLTGPDFPLEEAPVFKRTGSALHRFKSARYSEGGYSSVCPNLLSHISVSTDTMSDLTQDGKNYDFMFQPLMLYAQTWTSELVQRDTRLRDSTFHWHLRCNRCVRPIDDVTLETSQIFEFPDVSKRISRMVSGAVPHFQRLPDIRLRPGDFESLSGREKSHHIGSAQGLLYSILVAIHDSGYNDGTIFPVNIYGKVSPRDYLRGLARGVLIGSSICFLTRMTNININRPLELISGVISYILLRLDNHPSLYIMLREPSLRGEIFSIPQKIPAAYPTTMKEGNRSILCYLQHVLRYEREIITASPENDWLWIFSDFRSAKMTYLTLITYQSHLLLQRVERNLSKSMRDNLRQLSSLMRQVLGGHGEDTLESDDNIQRLLKDSLRRTRWVDQEVRHAARTMTGDYSPNKKVSRKVGCSEWVCSAQQVAVSTSANPAPVSELDIRALSKRFQNPLISGLRVVQWATGAHYKLKPILDDLNVFPSLCLVVGDGSGGISRAVLNMFPDAKLVFNSLLEVNDLMASGTHPLPPSAIMRGGNDIVSRVIDFDSIWEKPSDLRNLATWKYFQSVQKQVNMSYDLIICDAEVTDIASINRITLLMSDFALSIDGPLYLVFKTYGTMLVNPNYKAIQHLSRAFPSVTGFITQVTSSFSSELYLRFSKRGKFFRDAEYLTSSTLREMSLVLFNCSSPKSEMQRARSLNYQDLVRGFPEEIISNPYNEMIITLIDSDVESFLVHKMVDDLELQRGTLSKVAIIIAIMIVFSNRVFNVSKPLTDPLFYPPSDPKILRHFNICCSTMMYLSTALGDVPSFARLHDLYNRPITYYFRKQFIRGNVYLSWSWSNDTSVFKRVACNSGLSLSSHWIRLIYKIVKTTRLVGSIKDLSREVERHLHRYNRWITLEDIRSRSSLLDYSCL</sequence>
<comment type="function">
    <text evidence="2">RNA-directed RNA polymerase that catalyzes the transcription of viral mRNAs, their capping and polyadenylation. The template is composed of the viral RNA tightly encapsidated by the nucleoprotein (N). The viral polymerase binds to the genomic RNA at the 3' leader promoter, and transcribes subsequently all viral mRNAs with a decreasing efficiency. The first gene is the most transcribed, and the last the least transcribed. The viral phosphoprotein acts as a processivity factor. Capping is concomitant with initiation of mRNA transcription. Indeed, a GDP polyribonucleotidyl transferase (PRNTase) adds the cap structure when the nascent RNA chain length has reached few nucleotides. Ribose 2'-O methylation of viral mRNA cap precedes and facilitates subsequent guanine-N-7 methylation, both activities being carried by the viral polymerase. Polyadenylation of mRNAs occur by a stuttering mechanism at a slipery stop site present at the end viral genes. After finishing transcription of a mRNA, the polymerase can resume transcription of the downstream gene.</text>
</comment>
<comment type="function">
    <text evidence="2">RNA-directed RNA polymerase that catalyzes the replication of viral genomic RNA. The template is composed of the viral RNA tightly encapsidated by the nucleoprotein (N). The replicase mode is dependent on intracellular N protein concentration. In this mode, the polymerase replicates the whole viral genome without recognizing transcriptional signals, and the replicated genome is not caped or polyadenylated.</text>
</comment>
<comment type="catalytic activity">
    <reaction evidence="4">
        <text>RNA(n) + a ribonucleoside 5'-triphosphate = RNA(n+1) + diphosphate</text>
        <dbReference type="Rhea" id="RHEA:21248"/>
        <dbReference type="Rhea" id="RHEA-COMP:14527"/>
        <dbReference type="Rhea" id="RHEA-COMP:17342"/>
        <dbReference type="ChEBI" id="CHEBI:33019"/>
        <dbReference type="ChEBI" id="CHEBI:61557"/>
        <dbReference type="ChEBI" id="CHEBI:140395"/>
        <dbReference type="EC" id="2.7.7.48"/>
    </reaction>
</comment>
<comment type="catalytic activity">
    <reaction evidence="2">
        <text>a 5'-end (5'-triphosphoguanosine)-adenylyl-adenylyl-cytidylyl-adenosine in mRNA + 2 S-adenosyl-L-methionine = a 5'-end (N(7)-methyl 5'-triphosphoguanosine)-(2'-O-methyladenylyl)-adenylyl-cytidylyl-adenosine in mRNA + 2 S-adenosyl-L-homocysteine + H(+)</text>
        <dbReference type="Rhea" id="RHEA:65376"/>
        <dbReference type="Rhea" id="RHEA-COMP:16797"/>
        <dbReference type="Rhea" id="RHEA-COMP:16798"/>
        <dbReference type="ChEBI" id="CHEBI:15378"/>
        <dbReference type="ChEBI" id="CHEBI:57856"/>
        <dbReference type="ChEBI" id="CHEBI:59789"/>
        <dbReference type="ChEBI" id="CHEBI:156483"/>
        <dbReference type="ChEBI" id="CHEBI:156484"/>
        <dbReference type="EC" id="2.1.1.375"/>
    </reaction>
</comment>
<comment type="catalytic activity">
    <reaction evidence="2">
        <text>a 5'-end (5'-triphosphoguanosine)-adenylyl-adenylyl-cytidylyl-adenosine in mRNA + S-adenosyl-L-methionine = a 5'-end (5'-triphosphoguanosine)-(2'-O-methyladenylyl)-adenylyl-cytidylyl-adenosine in mRNA + S-adenosyl-L-homocysteine + H(+)</text>
        <dbReference type="Rhea" id="RHEA:65380"/>
        <dbReference type="Rhea" id="RHEA-COMP:16797"/>
        <dbReference type="Rhea" id="RHEA-COMP:16801"/>
        <dbReference type="ChEBI" id="CHEBI:15378"/>
        <dbReference type="ChEBI" id="CHEBI:57856"/>
        <dbReference type="ChEBI" id="CHEBI:59789"/>
        <dbReference type="ChEBI" id="CHEBI:156482"/>
        <dbReference type="ChEBI" id="CHEBI:156484"/>
    </reaction>
</comment>
<comment type="catalytic activity">
    <reaction evidence="3">
        <text>a 5'-end triphospho-adenylyl-adenylyl-cytidylyl-adenosine in mRNA + GDP + H(+) = a 5'-end (5'-triphosphoguanosine)-adenylyl-adenylyl-cytidylyl-adenosine in mRNA + diphosphate</text>
        <dbReference type="Rhea" id="RHEA:65436"/>
        <dbReference type="Rhea" id="RHEA-COMP:16797"/>
        <dbReference type="Rhea" id="RHEA-COMP:16799"/>
        <dbReference type="ChEBI" id="CHEBI:15378"/>
        <dbReference type="ChEBI" id="CHEBI:33019"/>
        <dbReference type="ChEBI" id="CHEBI:58189"/>
        <dbReference type="ChEBI" id="CHEBI:156484"/>
        <dbReference type="ChEBI" id="CHEBI:156503"/>
        <dbReference type="EC" id="2.7.7.88"/>
    </reaction>
</comment>
<comment type="catalytic activity">
    <reaction evidence="2">
        <text>a 5'-end (5'-triphosphoguanosine)-(2'-O-methyladenylyl)-adenylyl-cytidylyl-adenosine in mRNA + S-adenosyl-L-methionine = a 5'-end (N(7)-methyl 5'-triphosphoguanosine)-(2'-O-methyladenylyl)-adenylyl-cytidylyl-adenosine in mRNA + S-adenosyl-L-homocysteine</text>
        <dbReference type="Rhea" id="RHEA:65440"/>
        <dbReference type="Rhea" id="RHEA-COMP:16798"/>
        <dbReference type="Rhea" id="RHEA-COMP:16801"/>
        <dbReference type="ChEBI" id="CHEBI:57856"/>
        <dbReference type="ChEBI" id="CHEBI:59789"/>
        <dbReference type="ChEBI" id="CHEBI:156482"/>
        <dbReference type="ChEBI" id="CHEBI:156483"/>
    </reaction>
</comment>
<comment type="catalytic activity">
    <reaction evidence="3">
        <text>GTP + H2O = GDP + phosphate + H(+)</text>
        <dbReference type="Rhea" id="RHEA:19669"/>
        <dbReference type="ChEBI" id="CHEBI:15377"/>
        <dbReference type="ChEBI" id="CHEBI:15378"/>
        <dbReference type="ChEBI" id="CHEBI:37565"/>
        <dbReference type="ChEBI" id="CHEBI:43474"/>
        <dbReference type="ChEBI" id="CHEBI:58189"/>
    </reaction>
</comment>
<comment type="subunit">
    <text evidence="2">May form homodimer. Interacts with the P protein.</text>
</comment>
<comment type="subcellular location">
    <subcellularLocation>
        <location evidence="2">Virion</location>
    </subcellularLocation>
    <subcellularLocation>
        <location evidence="2">Host cytoplasm</location>
    </subcellularLocation>
    <text evidence="2">L and P are packaged asymmetrically towards the blunt end of the virus.</text>
</comment>
<comment type="similarity">
    <text evidence="7">Belongs to the rhabdoviruses protein L family.</text>
</comment>
<name>L_RABVE</name>
<organism>
    <name type="scientific">Rabies virus (strain ERA)</name>
    <name type="common">RABV</name>
    <dbReference type="NCBI Taxonomy" id="11295"/>
    <lineage>
        <taxon>Viruses</taxon>
        <taxon>Riboviria</taxon>
        <taxon>Orthornavirae</taxon>
        <taxon>Negarnaviricota</taxon>
        <taxon>Haploviricotina</taxon>
        <taxon>Monjiviricetes</taxon>
        <taxon>Mononegavirales</taxon>
        <taxon>Rhabdoviridae</taxon>
        <taxon>Alpharhabdovirinae</taxon>
        <taxon>Lyssavirus</taxon>
        <taxon>Lyssavirus rabies</taxon>
    </lineage>
</organism>